<evidence type="ECO:0000250" key="1"/>
<evidence type="ECO:0000255" key="2">
    <source>
        <dbReference type="HAMAP-Rule" id="MF_00100"/>
    </source>
</evidence>
<evidence type="ECO:0000256" key="3">
    <source>
        <dbReference type="SAM" id="MobiDB-lite"/>
    </source>
</evidence>
<comment type="function">
    <text evidence="2">One of the essential components for the initiation of protein synthesis. Protects formylmethionyl-tRNA from spontaneous hydrolysis and promotes its binding to the 30S ribosomal subunits. Also involved in the hydrolysis of GTP during the formation of the 70S ribosomal complex.</text>
</comment>
<comment type="subcellular location">
    <subcellularLocation>
        <location evidence="2">Cytoplasm</location>
    </subcellularLocation>
</comment>
<comment type="similarity">
    <text evidence="2">Belongs to the TRAFAC class translation factor GTPase superfamily. Classic translation factor GTPase family. IF-2 subfamily.</text>
</comment>
<accession>A4SY78</accession>
<gene>
    <name evidence="2" type="primary">infB</name>
    <name type="ordered locus">Pnuc_1227</name>
</gene>
<keyword id="KW-0963">Cytoplasm</keyword>
<keyword id="KW-0342">GTP-binding</keyword>
<keyword id="KW-0396">Initiation factor</keyword>
<keyword id="KW-0547">Nucleotide-binding</keyword>
<keyword id="KW-0648">Protein biosynthesis</keyword>
<keyword id="KW-1185">Reference proteome</keyword>
<dbReference type="EMBL" id="CP000655">
    <property type="protein sequence ID" value="ABP34442.1"/>
    <property type="molecule type" value="Genomic_DNA"/>
</dbReference>
<dbReference type="RefSeq" id="WP_011903067.1">
    <property type="nucleotide sequence ID" value="NC_009379.1"/>
</dbReference>
<dbReference type="SMR" id="A4SY78"/>
<dbReference type="GeneID" id="31481614"/>
<dbReference type="KEGG" id="pnu:Pnuc_1227"/>
<dbReference type="eggNOG" id="COG0532">
    <property type="taxonomic scope" value="Bacteria"/>
</dbReference>
<dbReference type="HOGENOM" id="CLU_006301_6_0_4"/>
<dbReference type="Proteomes" id="UP000000231">
    <property type="component" value="Chromosome"/>
</dbReference>
<dbReference type="GO" id="GO:0005829">
    <property type="term" value="C:cytosol"/>
    <property type="evidence" value="ECO:0007669"/>
    <property type="project" value="TreeGrafter"/>
</dbReference>
<dbReference type="GO" id="GO:0005525">
    <property type="term" value="F:GTP binding"/>
    <property type="evidence" value="ECO:0007669"/>
    <property type="project" value="UniProtKB-KW"/>
</dbReference>
<dbReference type="GO" id="GO:0003924">
    <property type="term" value="F:GTPase activity"/>
    <property type="evidence" value="ECO:0007669"/>
    <property type="project" value="UniProtKB-UniRule"/>
</dbReference>
<dbReference type="GO" id="GO:0097216">
    <property type="term" value="F:guanosine tetraphosphate binding"/>
    <property type="evidence" value="ECO:0007669"/>
    <property type="project" value="UniProtKB-ARBA"/>
</dbReference>
<dbReference type="GO" id="GO:0003743">
    <property type="term" value="F:translation initiation factor activity"/>
    <property type="evidence" value="ECO:0007669"/>
    <property type="project" value="UniProtKB-UniRule"/>
</dbReference>
<dbReference type="CDD" id="cd01887">
    <property type="entry name" value="IF2_eIF5B"/>
    <property type="match status" value="1"/>
</dbReference>
<dbReference type="CDD" id="cd03702">
    <property type="entry name" value="IF2_mtIF2_II"/>
    <property type="match status" value="1"/>
</dbReference>
<dbReference type="CDD" id="cd03692">
    <property type="entry name" value="mtIF2_IVc"/>
    <property type="match status" value="1"/>
</dbReference>
<dbReference type="FunFam" id="2.40.30.10:FF:000007">
    <property type="entry name" value="Translation initiation factor IF-2"/>
    <property type="match status" value="1"/>
</dbReference>
<dbReference type="FunFam" id="2.40.30.10:FF:000008">
    <property type="entry name" value="Translation initiation factor IF-2"/>
    <property type="match status" value="1"/>
</dbReference>
<dbReference type="FunFam" id="3.40.50.10050:FF:000001">
    <property type="entry name" value="Translation initiation factor IF-2"/>
    <property type="match status" value="1"/>
</dbReference>
<dbReference type="FunFam" id="3.40.50.300:FF:000019">
    <property type="entry name" value="Translation initiation factor IF-2"/>
    <property type="match status" value="1"/>
</dbReference>
<dbReference type="Gene3D" id="3.40.50.300">
    <property type="entry name" value="P-loop containing nucleotide triphosphate hydrolases"/>
    <property type="match status" value="1"/>
</dbReference>
<dbReference type="Gene3D" id="3.30.56.50">
    <property type="entry name" value="Putative DNA-binding domain, N-terminal subdomain of bacterial translation initiation factor IF2"/>
    <property type="match status" value="1"/>
</dbReference>
<dbReference type="Gene3D" id="2.40.30.10">
    <property type="entry name" value="Translation factors"/>
    <property type="match status" value="2"/>
</dbReference>
<dbReference type="Gene3D" id="3.40.50.10050">
    <property type="entry name" value="Translation initiation factor IF- 2, domain 3"/>
    <property type="match status" value="1"/>
</dbReference>
<dbReference type="HAMAP" id="MF_00100_B">
    <property type="entry name" value="IF_2_B"/>
    <property type="match status" value="1"/>
</dbReference>
<dbReference type="InterPro" id="IPR009061">
    <property type="entry name" value="DNA-bd_dom_put_sf"/>
</dbReference>
<dbReference type="InterPro" id="IPR053905">
    <property type="entry name" value="EF-G-like_DII"/>
</dbReference>
<dbReference type="InterPro" id="IPR004161">
    <property type="entry name" value="EFTu-like_2"/>
</dbReference>
<dbReference type="InterPro" id="IPR013575">
    <property type="entry name" value="IF2_assoc_dom_bac"/>
</dbReference>
<dbReference type="InterPro" id="IPR044145">
    <property type="entry name" value="IF2_II"/>
</dbReference>
<dbReference type="InterPro" id="IPR006847">
    <property type="entry name" value="IF2_N"/>
</dbReference>
<dbReference type="InterPro" id="IPR027417">
    <property type="entry name" value="P-loop_NTPase"/>
</dbReference>
<dbReference type="InterPro" id="IPR005225">
    <property type="entry name" value="Small_GTP-bd"/>
</dbReference>
<dbReference type="InterPro" id="IPR000795">
    <property type="entry name" value="T_Tr_GTP-bd_dom"/>
</dbReference>
<dbReference type="InterPro" id="IPR000178">
    <property type="entry name" value="TF_IF2_bacterial-like"/>
</dbReference>
<dbReference type="InterPro" id="IPR015760">
    <property type="entry name" value="TIF_IF2"/>
</dbReference>
<dbReference type="InterPro" id="IPR023115">
    <property type="entry name" value="TIF_IF2_dom3"/>
</dbReference>
<dbReference type="InterPro" id="IPR036925">
    <property type="entry name" value="TIF_IF2_dom3_sf"/>
</dbReference>
<dbReference type="InterPro" id="IPR009000">
    <property type="entry name" value="Transl_B-barrel_sf"/>
</dbReference>
<dbReference type="NCBIfam" id="TIGR00487">
    <property type="entry name" value="IF-2"/>
    <property type="match status" value="1"/>
</dbReference>
<dbReference type="NCBIfam" id="TIGR00231">
    <property type="entry name" value="small_GTP"/>
    <property type="match status" value="1"/>
</dbReference>
<dbReference type="PANTHER" id="PTHR43381:SF5">
    <property type="entry name" value="TR-TYPE G DOMAIN-CONTAINING PROTEIN"/>
    <property type="match status" value="1"/>
</dbReference>
<dbReference type="PANTHER" id="PTHR43381">
    <property type="entry name" value="TRANSLATION INITIATION FACTOR IF-2-RELATED"/>
    <property type="match status" value="1"/>
</dbReference>
<dbReference type="Pfam" id="PF22042">
    <property type="entry name" value="EF-G_D2"/>
    <property type="match status" value="1"/>
</dbReference>
<dbReference type="Pfam" id="PF00009">
    <property type="entry name" value="GTP_EFTU"/>
    <property type="match status" value="1"/>
</dbReference>
<dbReference type="Pfam" id="PF03144">
    <property type="entry name" value="GTP_EFTU_D2"/>
    <property type="match status" value="1"/>
</dbReference>
<dbReference type="Pfam" id="PF11987">
    <property type="entry name" value="IF-2"/>
    <property type="match status" value="1"/>
</dbReference>
<dbReference type="Pfam" id="PF08364">
    <property type="entry name" value="IF2_assoc"/>
    <property type="match status" value="1"/>
</dbReference>
<dbReference type="Pfam" id="PF04760">
    <property type="entry name" value="IF2_N"/>
    <property type="match status" value="2"/>
</dbReference>
<dbReference type="SUPFAM" id="SSF52156">
    <property type="entry name" value="Initiation factor IF2/eIF5b, domain 3"/>
    <property type="match status" value="1"/>
</dbReference>
<dbReference type="SUPFAM" id="SSF52540">
    <property type="entry name" value="P-loop containing nucleoside triphosphate hydrolases"/>
    <property type="match status" value="1"/>
</dbReference>
<dbReference type="SUPFAM" id="SSF46955">
    <property type="entry name" value="Putative DNA-binding domain"/>
    <property type="match status" value="1"/>
</dbReference>
<dbReference type="SUPFAM" id="SSF50447">
    <property type="entry name" value="Translation proteins"/>
    <property type="match status" value="2"/>
</dbReference>
<dbReference type="PROSITE" id="PS51722">
    <property type="entry name" value="G_TR_2"/>
    <property type="match status" value="1"/>
</dbReference>
<dbReference type="PROSITE" id="PS01176">
    <property type="entry name" value="IF2"/>
    <property type="match status" value="1"/>
</dbReference>
<reference key="1">
    <citation type="journal article" date="2012" name="Stand. Genomic Sci.">
        <title>Complete genome sequence of Polynucleobacter necessarius subsp. asymbioticus type strain (QLW-P1DMWA-1(T)).</title>
        <authorList>
            <person name="Meincke L."/>
            <person name="Copeland A."/>
            <person name="Lapidus A."/>
            <person name="Lucas S."/>
            <person name="Berry K.W."/>
            <person name="Del Rio T.G."/>
            <person name="Hammon N."/>
            <person name="Dalin E."/>
            <person name="Tice H."/>
            <person name="Pitluck S."/>
            <person name="Richardson P."/>
            <person name="Bruce D."/>
            <person name="Goodwin L."/>
            <person name="Han C."/>
            <person name="Tapia R."/>
            <person name="Detter J.C."/>
            <person name="Schmutz J."/>
            <person name="Brettin T."/>
            <person name="Larimer F."/>
            <person name="Land M."/>
            <person name="Hauser L."/>
            <person name="Kyrpides N.C."/>
            <person name="Ivanova N."/>
            <person name="Goker M."/>
            <person name="Woyke T."/>
            <person name="Wu Q.L."/>
            <person name="Pockl M."/>
            <person name="Hahn M.W."/>
            <person name="Klenk H.P."/>
        </authorList>
    </citation>
    <scope>NUCLEOTIDE SEQUENCE [LARGE SCALE GENOMIC DNA]</scope>
    <source>
        <strain>DSM 18221 / CIP 109841 / QLW-P1DMWA-1</strain>
    </source>
</reference>
<protein>
    <recommendedName>
        <fullName evidence="2">Translation initiation factor IF-2</fullName>
    </recommendedName>
</protein>
<organism>
    <name type="scientific">Polynucleobacter asymbioticus (strain DSM 18221 / CIP 109841 / QLW-P1DMWA-1)</name>
    <name type="common">Polynucleobacter necessarius subsp. asymbioticus</name>
    <dbReference type="NCBI Taxonomy" id="312153"/>
    <lineage>
        <taxon>Bacteria</taxon>
        <taxon>Pseudomonadati</taxon>
        <taxon>Pseudomonadota</taxon>
        <taxon>Betaproteobacteria</taxon>
        <taxon>Burkholderiales</taxon>
        <taxon>Burkholderiaceae</taxon>
        <taxon>Polynucleobacter</taxon>
    </lineage>
</organism>
<name>IF2_POLAQ</name>
<feature type="chain" id="PRO_0000335499" description="Translation initiation factor IF-2">
    <location>
        <begin position="1"/>
        <end position="920"/>
    </location>
</feature>
<feature type="domain" description="tr-type G">
    <location>
        <begin position="418"/>
        <end position="585"/>
    </location>
</feature>
<feature type="region of interest" description="Disordered" evidence="3">
    <location>
        <begin position="149"/>
        <end position="197"/>
    </location>
</feature>
<feature type="region of interest" description="Disordered" evidence="3">
    <location>
        <begin position="245"/>
        <end position="319"/>
    </location>
</feature>
<feature type="region of interest" description="G1" evidence="1">
    <location>
        <begin position="427"/>
        <end position="434"/>
    </location>
</feature>
<feature type="region of interest" description="G2" evidence="1">
    <location>
        <begin position="452"/>
        <end position="456"/>
    </location>
</feature>
<feature type="region of interest" description="G3" evidence="1">
    <location>
        <begin position="473"/>
        <end position="476"/>
    </location>
</feature>
<feature type="region of interest" description="G4" evidence="1">
    <location>
        <begin position="527"/>
        <end position="530"/>
    </location>
</feature>
<feature type="region of interest" description="G5" evidence="1">
    <location>
        <begin position="563"/>
        <end position="565"/>
    </location>
</feature>
<feature type="compositionally biased region" description="Basic and acidic residues" evidence="3">
    <location>
        <begin position="149"/>
        <end position="175"/>
    </location>
</feature>
<feature type="compositionally biased region" description="Basic and acidic residues" evidence="3">
    <location>
        <begin position="186"/>
        <end position="197"/>
    </location>
</feature>
<feature type="compositionally biased region" description="Basic and acidic residues" evidence="3">
    <location>
        <begin position="255"/>
        <end position="265"/>
    </location>
</feature>
<feature type="compositionally biased region" description="Gly residues" evidence="3">
    <location>
        <begin position="301"/>
        <end position="311"/>
    </location>
</feature>
<feature type="binding site" evidence="2">
    <location>
        <begin position="427"/>
        <end position="434"/>
    </location>
    <ligand>
        <name>GTP</name>
        <dbReference type="ChEBI" id="CHEBI:37565"/>
    </ligand>
</feature>
<feature type="binding site" evidence="2">
    <location>
        <begin position="473"/>
        <end position="477"/>
    </location>
    <ligand>
        <name>GTP</name>
        <dbReference type="ChEBI" id="CHEBI:37565"/>
    </ligand>
</feature>
<feature type="binding site" evidence="2">
    <location>
        <begin position="527"/>
        <end position="530"/>
    </location>
    <ligand>
        <name>GTP</name>
        <dbReference type="ChEBI" id="CHEBI:37565"/>
    </ligand>
</feature>
<sequence length="920" mass="98348">MATTVKVLAKELKRTAPDLLEQLKAAGIEKGSEDDSITEKDKTVLLEHLQKEHGSAETGARKKITLIKRENSEIRQADSAGRTRTVQVEVRKKRVLVKRSDEAAALEVEEAPAKVIAPTEPVKSILSAEELEKRAAEATRQAELLARQEAEMKAAEEARQKEVAAPVVEKEEKPVDNAPDAAATAAEKKATADKAAKDLAATKEKELADIRVRRAAAEAEALAIRDMMSAPARVLKAPSEIAAEEAKKGTLHKPAKPEGADDKKKAVAKVGGKTIKSAETSSTWQEEGAKKPGGLKTRGDSSGGVGGWRSGGGRKKQRQIAEANVDTNFQVPTEPVVRDVHVPETITVAELAHAMAVKSAEVIKLLMGMGQMVTINQVLDQDTAMIIVEEMGHTAHAAKLDDPDLDLGTDGHDAELLPRPPVVTVMGHVDHGKTSLLDKIRAAKVATGEAGGITQHIGAYHVETPRGMITFLDTPGHEAFTAMRARGAKATDIVILVVAADDGVMPQTKEAIHHALAGGVPIVVAINKIDKPEANSERVKTELVAEQVVPEEYGGDVPFIPVSAKTGEGIDALLENVLLQAEILELKAAKDAPAQGLVIEARLDKGKGPVATILVQSGTLKRGDMLLAGSTYGRVRAMLDENGKPCNEAGPSIPVEIQGLGDVPAAGESVQVVPDERKAREIALFRQGKFRDVKLAKQQAFKLETMMENMEEGAVEAKLLPVIIKADVQGSQEALAQSLMKLSTPEVKVQIVHAGVGGITETDVNLAVASKAVIFGFNSRADAAARKLAENNGVDIRYHNIIYDAVDEVKLALSGMLTPDKKEEITGLVEIRQVFLVSKVGAIAGCLVVDGIVKRTSSVRLLRDNVVIWTGELDSLKRFKDDAKEVRAGVECGLSLKGYNDIKEGDQLEVFEVTEVARSL</sequence>
<proteinExistence type="inferred from homology"/>